<accession>Q8K9J4</accession>
<organism>
    <name type="scientific">Buchnera aphidicola subsp. Schizaphis graminum (strain Sg)</name>
    <dbReference type="NCBI Taxonomy" id="198804"/>
    <lineage>
        <taxon>Bacteria</taxon>
        <taxon>Pseudomonadati</taxon>
        <taxon>Pseudomonadota</taxon>
        <taxon>Gammaproteobacteria</taxon>
        <taxon>Enterobacterales</taxon>
        <taxon>Erwiniaceae</taxon>
        <taxon>Buchnera</taxon>
    </lineage>
</organism>
<reference key="1">
    <citation type="journal article" date="2002" name="Science">
        <title>50 million years of genomic stasis in endosymbiotic bacteria.</title>
        <authorList>
            <person name="Tamas I."/>
            <person name="Klasson L."/>
            <person name="Canbaeck B."/>
            <person name="Naeslund A.K."/>
            <person name="Eriksson A.-S."/>
            <person name="Wernegreen J.J."/>
            <person name="Sandstroem J.P."/>
            <person name="Moran N.A."/>
            <person name="Andersson S.G.E."/>
        </authorList>
    </citation>
    <scope>NUCLEOTIDE SEQUENCE [LARGE SCALE GENOMIC DNA]</scope>
    <source>
        <strain>Sg</strain>
    </source>
</reference>
<feature type="chain" id="PRO_0000180118" description="Acyl carrier protein">
    <location>
        <begin position="1"/>
        <end position="79"/>
    </location>
</feature>
<feature type="domain" description="Carrier" evidence="2">
    <location>
        <begin position="1"/>
        <end position="77"/>
    </location>
</feature>
<feature type="modified residue" description="O-(pantetheine 4'-phosphoryl)serine" evidence="2">
    <location>
        <position position="37"/>
    </location>
</feature>
<name>ACP_BUCAP</name>
<comment type="function">
    <text evidence="1">Carrier of the growing fatty acid chain in fatty acid biosynthesis.</text>
</comment>
<comment type="pathway">
    <text evidence="1">Lipid metabolism; fatty acid biosynthesis.</text>
</comment>
<comment type="subcellular location">
    <subcellularLocation>
        <location evidence="1">Cytoplasm</location>
    </subcellularLocation>
</comment>
<comment type="PTM">
    <text evidence="1">4'-phosphopantetheine is transferred from CoA to a specific serine of apo-ACP by AcpS. This modification is essential for activity because fatty acids are bound in thioester linkage to the sulfhydryl of the prosthetic group.</text>
</comment>
<comment type="similarity">
    <text evidence="1">Belongs to the acyl carrier protein (ACP) family.</text>
</comment>
<protein>
    <recommendedName>
        <fullName evidence="1">Acyl carrier protein</fullName>
        <shortName evidence="1">ACP</shortName>
    </recommendedName>
</protein>
<evidence type="ECO:0000255" key="1">
    <source>
        <dbReference type="HAMAP-Rule" id="MF_01217"/>
    </source>
</evidence>
<evidence type="ECO:0000255" key="2">
    <source>
        <dbReference type="PROSITE-ProRule" id="PRU00258"/>
    </source>
</evidence>
<keyword id="KW-0963">Cytoplasm</keyword>
<keyword id="KW-0275">Fatty acid biosynthesis</keyword>
<keyword id="KW-0276">Fatty acid metabolism</keyword>
<keyword id="KW-0444">Lipid biosynthesis</keyword>
<keyword id="KW-0443">Lipid metabolism</keyword>
<keyword id="KW-0596">Phosphopantetheine</keyword>
<keyword id="KW-0597">Phosphoprotein</keyword>
<sequence>MNNVEKKIKKIISKILNIKVEKILNNASFLDDLSADSLDIVELIMAIEEEFDIEISDEDAEKLNTVQKSIDYINNKNKK</sequence>
<gene>
    <name evidence="1" type="primary">acpP</name>
    <name type="ordered locus">BUsg_340</name>
</gene>
<dbReference type="EMBL" id="AE013218">
    <property type="protein sequence ID" value="AAM67894.1"/>
    <property type="molecule type" value="Genomic_DNA"/>
</dbReference>
<dbReference type="RefSeq" id="WP_011053861.1">
    <property type="nucleotide sequence ID" value="NC_004061.1"/>
</dbReference>
<dbReference type="SMR" id="Q8K9J4"/>
<dbReference type="STRING" id="198804.BUsg_340"/>
<dbReference type="GeneID" id="93003811"/>
<dbReference type="KEGG" id="bas:BUsg_340"/>
<dbReference type="eggNOG" id="COG0236">
    <property type="taxonomic scope" value="Bacteria"/>
</dbReference>
<dbReference type="HOGENOM" id="CLU_108696_5_1_6"/>
<dbReference type="UniPathway" id="UPA00094"/>
<dbReference type="Proteomes" id="UP000000416">
    <property type="component" value="Chromosome"/>
</dbReference>
<dbReference type="GO" id="GO:0005737">
    <property type="term" value="C:cytoplasm"/>
    <property type="evidence" value="ECO:0007669"/>
    <property type="project" value="UniProtKB-SubCell"/>
</dbReference>
<dbReference type="GO" id="GO:0000035">
    <property type="term" value="F:acyl binding"/>
    <property type="evidence" value="ECO:0007669"/>
    <property type="project" value="TreeGrafter"/>
</dbReference>
<dbReference type="GO" id="GO:0000036">
    <property type="term" value="F:acyl carrier activity"/>
    <property type="evidence" value="ECO:0007669"/>
    <property type="project" value="UniProtKB-UniRule"/>
</dbReference>
<dbReference type="FunFam" id="1.10.1200.10:FF:000003">
    <property type="entry name" value="Acyl carrier protein"/>
    <property type="match status" value="1"/>
</dbReference>
<dbReference type="Gene3D" id="1.10.1200.10">
    <property type="entry name" value="ACP-like"/>
    <property type="match status" value="1"/>
</dbReference>
<dbReference type="HAMAP" id="MF_01217">
    <property type="entry name" value="Acyl_carrier"/>
    <property type="match status" value="1"/>
</dbReference>
<dbReference type="InterPro" id="IPR003231">
    <property type="entry name" value="ACP"/>
</dbReference>
<dbReference type="InterPro" id="IPR036736">
    <property type="entry name" value="ACP-like_sf"/>
</dbReference>
<dbReference type="InterPro" id="IPR009081">
    <property type="entry name" value="PP-bd_ACP"/>
</dbReference>
<dbReference type="NCBIfam" id="TIGR00517">
    <property type="entry name" value="acyl_carrier"/>
    <property type="match status" value="1"/>
</dbReference>
<dbReference type="NCBIfam" id="NF002148">
    <property type="entry name" value="PRK00982.1-2"/>
    <property type="match status" value="1"/>
</dbReference>
<dbReference type="NCBIfam" id="NF002149">
    <property type="entry name" value="PRK00982.1-3"/>
    <property type="match status" value="1"/>
</dbReference>
<dbReference type="NCBIfam" id="NF002150">
    <property type="entry name" value="PRK00982.1-4"/>
    <property type="match status" value="1"/>
</dbReference>
<dbReference type="NCBIfam" id="NF002151">
    <property type="entry name" value="PRK00982.1-5"/>
    <property type="match status" value="1"/>
</dbReference>
<dbReference type="PANTHER" id="PTHR20863">
    <property type="entry name" value="ACYL CARRIER PROTEIN"/>
    <property type="match status" value="1"/>
</dbReference>
<dbReference type="PANTHER" id="PTHR20863:SF76">
    <property type="entry name" value="CARRIER DOMAIN-CONTAINING PROTEIN"/>
    <property type="match status" value="1"/>
</dbReference>
<dbReference type="Pfam" id="PF00550">
    <property type="entry name" value="PP-binding"/>
    <property type="match status" value="1"/>
</dbReference>
<dbReference type="SUPFAM" id="SSF47336">
    <property type="entry name" value="ACP-like"/>
    <property type="match status" value="1"/>
</dbReference>
<dbReference type="PROSITE" id="PS50075">
    <property type="entry name" value="CARRIER"/>
    <property type="match status" value="1"/>
</dbReference>
<proteinExistence type="inferred from homology"/>